<sequence length="300" mass="32655">MNTLVLKIDAILSKHLKKQLAPYTISSQNTYVAFAAKKNGVTVLLYKSGKLVLQGNGANALAQELNLPVAKTVFEASNNSQDIPIIGSDEVGNGSYFGGIAVVASFVDPKDHSFLKKLGVDDSKKLSDKTIQQIAPLLEKQIPHQSLLLSPKKYNELVGKSKPYNAISIKVALHNQAIFLLLQKGIQPKQIVIDAFTSQSNYEKHLKKEKNHFPNPLTFQEKAESHYLAVAVSSIIARNLFLDNLDQLGQDLGYQLPSGAGSASDKVASQLLAAYGMSSLEYSAKLHFANTHKAQALLTK</sequence>
<feature type="chain" id="PRO_0000111706" description="Ribonuclease HIII">
    <location>
        <begin position="1"/>
        <end position="300"/>
    </location>
</feature>
<feature type="domain" description="RNase H type-2" evidence="2">
    <location>
        <begin position="83"/>
        <end position="300"/>
    </location>
</feature>
<feature type="binding site" evidence="1">
    <location>
        <position position="89"/>
    </location>
    <ligand>
        <name>a divalent metal cation</name>
        <dbReference type="ChEBI" id="CHEBI:60240"/>
    </ligand>
</feature>
<feature type="binding site" evidence="1">
    <location>
        <position position="90"/>
    </location>
    <ligand>
        <name>a divalent metal cation</name>
        <dbReference type="ChEBI" id="CHEBI:60240"/>
    </ligand>
</feature>
<feature type="binding site" evidence="1">
    <location>
        <position position="194"/>
    </location>
    <ligand>
        <name>a divalent metal cation</name>
        <dbReference type="ChEBI" id="CHEBI:60240"/>
    </ligand>
</feature>
<protein>
    <recommendedName>
        <fullName evidence="1">Ribonuclease HIII</fullName>
        <shortName evidence="1">RNase HIII</shortName>
        <ecNumber evidence="1">3.1.26.4</ecNumber>
    </recommendedName>
</protein>
<keyword id="KW-0963">Cytoplasm</keyword>
<keyword id="KW-0255">Endonuclease</keyword>
<keyword id="KW-0378">Hydrolase</keyword>
<keyword id="KW-0460">Magnesium</keyword>
<keyword id="KW-0479">Metal-binding</keyword>
<keyword id="KW-0540">Nuclease</keyword>
<comment type="function">
    <text evidence="1">Endonuclease that specifically degrades the RNA of RNA-DNA hybrids.</text>
</comment>
<comment type="catalytic activity">
    <reaction evidence="1">
        <text>Endonucleolytic cleavage to 5'-phosphomonoester.</text>
        <dbReference type="EC" id="3.1.26.4"/>
    </reaction>
</comment>
<comment type="cofactor">
    <cofactor evidence="1">
        <name>Mn(2+)</name>
        <dbReference type="ChEBI" id="CHEBI:29035"/>
    </cofactor>
    <cofactor evidence="1">
        <name>Mg(2+)</name>
        <dbReference type="ChEBI" id="CHEBI:18420"/>
    </cofactor>
    <text evidence="1">Manganese or magnesium. Binds 1 divalent metal ion per monomer in the absence of substrate. May bind a second metal ion after substrate binding.</text>
</comment>
<comment type="subcellular location">
    <subcellularLocation>
        <location evidence="1">Cytoplasm</location>
    </subcellularLocation>
</comment>
<comment type="similarity">
    <text evidence="1">Belongs to the RNase HII family. RnhC subfamily.</text>
</comment>
<dbReference type="EC" id="3.1.26.4" evidence="1"/>
<dbReference type="EMBL" id="AE009949">
    <property type="protein sequence ID" value="AAL98408.1"/>
    <property type="molecule type" value="Genomic_DNA"/>
</dbReference>
<dbReference type="RefSeq" id="WP_010922635.1">
    <property type="nucleotide sequence ID" value="NC_003485.1"/>
</dbReference>
<dbReference type="SMR" id="P66678"/>
<dbReference type="KEGG" id="spm:spyM18_1906"/>
<dbReference type="HOGENOM" id="CLU_059546_1_0_9"/>
<dbReference type="GO" id="GO:0005737">
    <property type="term" value="C:cytoplasm"/>
    <property type="evidence" value="ECO:0007669"/>
    <property type="project" value="UniProtKB-SubCell"/>
</dbReference>
<dbReference type="GO" id="GO:0032299">
    <property type="term" value="C:ribonuclease H2 complex"/>
    <property type="evidence" value="ECO:0007669"/>
    <property type="project" value="TreeGrafter"/>
</dbReference>
<dbReference type="GO" id="GO:0000287">
    <property type="term" value="F:magnesium ion binding"/>
    <property type="evidence" value="ECO:0007669"/>
    <property type="project" value="UniProtKB-UniRule"/>
</dbReference>
<dbReference type="GO" id="GO:0003723">
    <property type="term" value="F:RNA binding"/>
    <property type="evidence" value="ECO:0007669"/>
    <property type="project" value="InterPro"/>
</dbReference>
<dbReference type="GO" id="GO:0004523">
    <property type="term" value="F:RNA-DNA hybrid ribonuclease activity"/>
    <property type="evidence" value="ECO:0007669"/>
    <property type="project" value="UniProtKB-UniRule"/>
</dbReference>
<dbReference type="GO" id="GO:0043137">
    <property type="term" value="P:DNA replication, removal of RNA primer"/>
    <property type="evidence" value="ECO:0007669"/>
    <property type="project" value="TreeGrafter"/>
</dbReference>
<dbReference type="GO" id="GO:0006298">
    <property type="term" value="P:mismatch repair"/>
    <property type="evidence" value="ECO:0007669"/>
    <property type="project" value="TreeGrafter"/>
</dbReference>
<dbReference type="CDD" id="cd06590">
    <property type="entry name" value="RNase_HII_bacteria_HIII_like"/>
    <property type="match status" value="1"/>
</dbReference>
<dbReference type="CDD" id="cd14796">
    <property type="entry name" value="RNAse_HIII_N"/>
    <property type="match status" value="1"/>
</dbReference>
<dbReference type="FunFam" id="3.30.420.10:FF:000047">
    <property type="entry name" value="Ribonuclease HIII"/>
    <property type="match status" value="1"/>
</dbReference>
<dbReference type="Gene3D" id="3.30.420.10">
    <property type="entry name" value="Ribonuclease H-like superfamily/Ribonuclease H"/>
    <property type="match status" value="1"/>
</dbReference>
<dbReference type="Gene3D" id="3.30.310.10">
    <property type="entry name" value="TATA-Binding Protein"/>
    <property type="match status" value="1"/>
</dbReference>
<dbReference type="HAMAP" id="MF_00053">
    <property type="entry name" value="RNase_HIII"/>
    <property type="match status" value="1"/>
</dbReference>
<dbReference type="InterPro" id="IPR001352">
    <property type="entry name" value="RNase_HII/HIII"/>
</dbReference>
<dbReference type="InterPro" id="IPR024567">
    <property type="entry name" value="RNase_HII/HIII_dom"/>
</dbReference>
<dbReference type="InterPro" id="IPR004641">
    <property type="entry name" value="RNase_HIII"/>
</dbReference>
<dbReference type="InterPro" id="IPR024568">
    <property type="entry name" value="RNase_HIII_N"/>
</dbReference>
<dbReference type="InterPro" id="IPR012337">
    <property type="entry name" value="RNaseH-like_sf"/>
</dbReference>
<dbReference type="InterPro" id="IPR036397">
    <property type="entry name" value="RNaseH_sf"/>
</dbReference>
<dbReference type="InterPro" id="IPR012295">
    <property type="entry name" value="TBP_dom_sf"/>
</dbReference>
<dbReference type="NCBIfam" id="TIGR00716">
    <property type="entry name" value="rnhC"/>
    <property type="match status" value="1"/>
</dbReference>
<dbReference type="PANTHER" id="PTHR10954:SF23">
    <property type="entry name" value="RIBONUCLEASE"/>
    <property type="match status" value="1"/>
</dbReference>
<dbReference type="PANTHER" id="PTHR10954">
    <property type="entry name" value="RIBONUCLEASE H2 SUBUNIT A"/>
    <property type="match status" value="1"/>
</dbReference>
<dbReference type="Pfam" id="PF11858">
    <property type="entry name" value="DUF3378"/>
    <property type="match status" value="1"/>
</dbReference>
<dbReference type="Pfam" id="PF01351">
    <property type="entry name" value="RNase_HII"/>
    <property type="match status" value="1"/>
</dbReference>
<dbReference type="PIRSF" id="PIRSF037748">
    <property type="entry name" value="RnhC"/>
    <property type="match status" value="1"/>
</dbReference>
<dbReference type="SUPFAM" id="SSF53098">
    <property type="entry name" value="Ribonuclease H-like"/>
    <property type="match status" value="1"/>
</dbReference>
<dbReference type="PROSITE" id="PS51975">
    <property type="entry name" value="RNASE_H_2"/>
    <property type="match status" value="1"/>
</dbReference>
<organism>
    <name type="scientific">Streptococcus pyogenes serotype M18 (strain MGAS8232)</name>
    <dbReference type="NCBI Taxonomy" id="186103"/>
    <lineage>
        <taxon>Bacteria</taxon>
        <taxon>Bacillati</taxon>
        <taxon>Bacillota</taxon>
        <taxon>Bacilli</taxon>
        <taxon>Lactobacillales</taxon>
        <taxon>Streptococcaceae</taxon>
        <taxon>Streptococcus</taxon>
    </lineage>
</organism>
<reference key="1">
    <citation type="journal article" date="2002" name="Proc. Natl. Acad. Sci. U.S.A.">
        <title>Genome sequence and comparative microarray analysis of serotype M18 group A Streptococcus strains associated with acute rheumatic fever outbreaks.</title>
        <authorList>
            <person name="Smoot J.C."/>
            <person name="Barbian K.D."/>
            <person name="Van Gompel J.J."/>
            <person name="Smoot L.M."/>
            <person name="Chaussee M.S."/>
            <person name="Sylva G.L."/>
            <person name="Sturdevant D.E."/>
            <person name="Ricklefs S.M."/>
            <person name="Porcella S.F."/>
            <person name="Parkins L.D."/>
            <person name="Beres S.B."/>
            <person name="Campbell D.S."/>
            <person name="Smith T.M."/>
            <person name="Zhang Q."/>
            <person name="Kapur V."/>
            <person name="Daly J.A."/>
            <person name="Veasy L.G."/>
            <person name="Musser J.M."/>
        </authorList>
    </citation>
    <scope>NUCLEOTIDE SEQUENCE [LARGE SCALE GENOMIC DNA]</scope>
    <source>
        <strain>MGAS8232</strain>
    </source>
</reference>
<name>RNH3_STRP8</name>
<accession>P66678</accession>
<accession>Q99Y70</accession>
<proteinExistence type="inferred from homology"/>
<gene>
    <name evidence="1" type="primary">rnhC</name>
    <name type="ordered locus">spyM18_1906</name>
</gene>
<evidence type="ECO:0000255" key="1">
    <source>
        <dbReference type="HAMAP-Rule" id="MF_00053"/>
    </source>
</evidence>
<evidence type="ECO:0000255" key="2">
    <source>
        <dbReference type="PROSITE-ProRule" id="PRU01319"/>
    </source>
</evidence>